<feature type="chain" id="PRO_0000170314" description="Putative regulator AldR">
    <location>
        <begin position="1"/>
        <end position="126"/>
    </location>
</feature>
<feature type="sequence conflict" description="In Ref. 1; AAB81924." evidence="1" ref="1">
    <original>P</original>
    <variation>A</variation>
    <location>
        <position position="100"/>
    </location>
</feature>
<name>ALDR_LACLA</name>
<proteinExistence type="inferred from homology"/>
<dbReference type="EMBL" id="U92974">
    <property type="protein sequence ID" value="AAB81924.1"/>
    <property type="molecule type" value="Genomic_DNA"/>
</dbReference>
<dbReference type="EMBL" id="AE005176">
    <property type="protein sequence ID" value="AAK05327.1"/>
    <property type="molecule type" value="Genomic_DNA"/>
</dbReference>
<dbReference type="PIR" id="E86778">
    <property type="entry name" value="E86778"/>
</dbReference>
<dbReference type="RefSeq" id="NP_267385.1">
    <property type="nucleotide sequence ID" value="NC_002662.1"/>
</dbReference>
<dbReference type="RefSeq" id="WP_003131142.1">
    <property type="nucleotide sequence ID" value="NC_002662.1"/>
</dbReference>
<dbReference type="SMR" id="O34133"/>
<dbReference type="PaxDb" id="272623-L52644"/>
<dbReference type="EnsemblBacteria" id="AAK05327">
    <property type="protein sequence ID" value="AAK05327"/>
    <property type="gene ID" value="L52644"/>
</dbReference>
<dbReference type="KEGG" id="lla:L52644"/>
<dbReference type="PATRIC" id="fig|272623.7.peg.1329"/>
<dbReference type="eggNOG" id="COG0251">
    <property type="taxonomic scope" value="Bacteria"/>
</dbReference>
<dbReference type="HOGENOM" id="CLU_100715_7_0_9"/>
<dbReference type="OrthoDB" id="9803101at2"/>
<dbReference type="Proteomes" id="UP000002196">
    <property type="component" value="Chromosome"/>
</dbReference>
<dbReference type="GO" id="GO:0005829">
    <property type="term" value="C:cytosol"/>
    <property type="evidence" value="ECO:0007669"/>
    <property type="project" value="TreeGrafter"/>
</dbReference>
<dbReference type="GO" id="GO:0019239">
    <property type="term" value="F:deaminase activity"/>
    <property type="evidence" value="ECO:0007669"/>
    <property type="project" value="TreeGrafter"/>
</dbReference>
<dbReference type="CDD" id="cd00448">
    <property type="entry name" value="YjgF_YER057c_UK114_family"/>
    <property type="match status" value="1"/>
</dbReference>
<dbReference type="FunFam" id="3.30.1330.40:FF:000001">
    <property type="entry name" value="L-PSP family endoribonuclease"/>
    <property type="match status" value="1"/>
</dbReference>
<dbReference type="Gene3D" id="3.30.1330.40">
    <property type="entry name" value="RutC-like"/>
    <property type="match status" value="1"/>
</dbReference>
<dbReference type="InterPro" id="IPR006056">
    <property type="entry name" value="RidA"/>
</dbReference>
<dbReference type="InterPro" id="IPR019897">
    <property type="entry name" value="RidA_CS"/>
</dbReference>
<dbReference type="InterPro" id="IPR035959">
    <property type="entry name" value="RutC-like_sf"/>
</dbReference>
<dbReference type="InterPro" id="IPR006175">
    <property type="entry name" value="YjgF/YER057c/UK114"/>
</dbReference>
<dbReference type="NCBIfam" id="TIGR00004">
    <property type="entry name" value="Rid family detoxifying hydrolase"/>
    <property type="match status" value="1"/>
</dbReference>
<dbReference type="PANTHER" id="PTHR11803">
    <property type="entry name" value="2-IMINOBUTANOATE/2-IMINOPROPANOATE DEAMINASE RIDA"/>
    <property type="match status" value="1"/>
</dbReference>
<dbReference type="PANTHER" id="PTHR11803:SF39">
    <property type="entry name" value="2-IMINOBUTANOATE_2-IMINOPROPANOATE DEAMINASE"/>
    <property type="match status" value="1"/>
</dbReference>
<dbReference type="Pfam" id="PF01042">
    <property type="entry name" value="Ribonuc_L-PSP"/>
    <property type="match status" value="1"/>
</dbReference>
<dbReference type="SUPFAM" id="SSF55298">
    <property type="entry name" value="YjgF-like"/>
    <property type="match status" value="1"/>
</dbReference>
<dbReference type="PROSITE" id="PS01094">
    <property type="entry name" value="UPF0076"/>
    <property type="match status" value="1"/>
</dbReference>
<keyword id="KW-1185">Reference proteome</keyword>
<gene>
    <name type="primary">aldR</name>
    <name type="ordered locus">LL1229</name>
    <name type="ORF">L52644</name>
</gene>
<protein>
    <recommendedName>
        <fullName>Putative regulator AldR</fullName>
    </recommendedName>
</protein>
<comment type="function">
    <text>Implicated in the regulation of isoleucine biosynthesis.</text>
</comment>
<comment type="similarity">
    <text evidence="1">Belongs to the RutC family.</text>
</comment>
<accession>O34133</accession>
<organism>
    <name type="scientific">Lactococcus lactis subsp. lactis (strain IL1403)</name>
    <name type="common">Streptococcus lactis</name>
    <dbReference type="NCBI Taxonomy" id="272623"/>
    <lineage>
        <taxon>Bacteria</taxon>
        <taxon>Bacillati</taxon>
        <taxon>Bacillota</taxon>
        <taxon>Bacilli</taxon>
        <taxon>Lactobacillales</taxon>
        <taxon>Streptococcaceae</taxon>
        <taxon>Lactococcus</taxon>
    </lineage>
</organism>
<sequence>MKIIATLDAPAAIGPYVQGKIVNGLLYASGQIPLNPLNGEIVGDSIETQTEQVMKNISAILKEAHSDFDLVIKTTCFLKNIEDFSRFNAIYSKFFDKEFPARSAVGVAGLPKNVLIEIEVIAEVKS</sequence>
<evidence type="ECO:0000305" key="1"/>
<reference key="1">
    <citation type="journal article" date="1997" name="J. Bacteriol.">
        <title>Dual role of alpha-acetolactate decarboxylase in Lactococcus lactis subsp. lactis.</title>
        <authorList>
            <person name="Goupil-Feuillerat N."/>
            <person name="Cocaign-Bousquet M."/>
            <person name="Godon J.-J."/>
            <person name="Ehrlich S.D."/>
            <person name="Renault P."/>
        </authorList>
    </citation>
    <scope>NUCLEOTIDE SEQUENCE [GENOMIC DNA]</scope>
    <source>
        <strain>NCDO 2118</strain>
    </source>
</reference>
<reference key="2">
    <citation type="journal article" date="2001" name="Genome Res.">
        <title>The complete genome sequence of the lactic acid bacterium Lactococcus lactis ssp. lactis IL1403.</title>
        <authorList>
            <person name="Bolotin A."/>
            <person name="Wincker P."/>
            <person name="Mauger S."/>
            <person name="Jaillon O."/>
            <person name="Malarme K."/>
            <person name="Weissenbach J."/>
            <person name="Ehrlich S.D."/>
            <person name="Sorokin A."/>
        </authorList>
    </citation>
    <scope>NUCLEOTIDE SEQUENCE [LARGE SCALE GENOMIC DNA]</scope>
    <source>
        <strain>IL1403</strain>
    </source>
</reference>